<reference key="1">
    <citation type="journal article" date="2002" name="Nature">
        <title>The genome sequence of Schizosaccharomyces pombe.</title>
        <authorList>
            <person name="Wood V."/>
            <person name="Gwilliam R."/>
            <person name="Rajandream M.A."/>
            <person name="Lyne M.H."/>
            <person name="Lyne R."/>
            <person name="Stewart A."/>
            <person name="Sgouros J.G."/>
            <person name="Peat N."/>
            <person name="Hayles J."/>
            <person name="Baker S.G."/>
            <person name="Basham D."/>
            <person name="Bowman S."/>
            <person name="Brooks K."/>
            <person name="Brown D."/>
            <person name="Brown S."/>
            <person name="Chillingworth T."/>
            <person name="Churcher C.M."/>
            <person name="Collins M."/>
            <person name="Connor R."/>
            <person name="Cronin A."/>
            <person name="Davis P."/>
            <person name="Feltwell T."/>
            <person name="Fraser A."/>
            <person name="Gentles S."/>
            <person name="Goble A."/>
            <person name="Hamlin N."/>
            <person name="Harris D.E."/>
            <person name="Hidalgo J."/>
            <person name="Hodgson G."/>
            <person name="Holroyd S."/>
            <person name="Hornsby T."/>
            <person name="Howarth S."/>
            <person name="Huckle E.J."/>
            <person name="Hunt S."/>
            <person name="Jagels K."/>
            <person name="James K.D."/>
            <person name="Jones L."/>
            <person name="Jones M."/>
            <person name="Leather S."/>
            <person name="McDonald S."/>
            <person name="McLean J."/>
            <person name="Mooney P."/>
            <person name="Moule S."/>
            <person name="Mungall K.L."/>
            <person name="Murphy L.D."/>
            <person name="Niblett D."/>
            <person name="Odell C."/>
            <person name="Oliver K."/>
            <person name="O'Neil S."/>
            <person name="Pearson D."/>
            <person name="Quail M.A."/>
            <person name="Rabbinowitsch E."/>
            <person name="Rutherford K.M."/>
            <person name="Rutter S."/>
            <person name="Saunders D."/>
            <person name="Seeger K."/>
            <person name="Sharp S."/>
            <person name="Skelton J."/>
            <person name="Simmonds M.N."/>
            <person name="Squares R."/>
            <person name="Squares S."/>
            <person name="Stevens K."/>
            <person name="Taylor K."/>
            <person name="Taylor R.G."/>
            <person name="Tivey A."/>
            <person name="Walsh S.V."/>
            <person name="Warren T."/>
            <person name="Whitehead S."/>
            <person name="Woodward J.R."/>
            <person name="Volckaert G."/>
            <person name="Aert R."/>
            <person name="Robben J."/>
            <person name="Grymonprez B."/>
            <person name="Weltjens I."/>
            <person name="Vanstreels E."/>
            <person name="Rieger M."/>
            <person name="Schaefer M."/>
            <person name="Mueller-Auer S."/>
            <person name="Gabel C."/>
            <person name="Fuchs M."/>
            <person name="Duesterhoeft A."/>
            <person name="Fritzc C."/>
            <person name="Holzer E."/>
            <person name="Moestl D."/>
            <person name="Hilbert H."/>
            <person name="Borzym K."/>
            <person name="Langer I."/>
            <person name="Beck A."/>
            <person name="Lehrach H."/>
            <person name="Reinhardt R."/>
            <person name="Pohl T.M."/>
            <person name="Eger P."/>
            <person name="Zimmermann W."/>
            <person name="Wedler H."/>
            <person name="Wambutt R."/>
            <person name="Purnelle B."/>
            <person name="Goffeau A."/>
            <person name="Cadieu E."/>
            <person name="Dreano S."/>
            <person name="Gloux S."/>
            <person name="Lelaure V."/>
            <person name="Mottier S."/>
            <person name="Galibert F."/>
            <person name="Aves S.J."/>
            <person name="Xiang Z."/>
            <person name="Hunt C."/>
            <person name="Moore K."/>
            <person name="Hurst S.M."/>
            <person name="Lucas M."/>
            <person name="Rochet M."/>
            <person name="Gaillardin C."/>
            <person name="Tallada V.A."/>
            <person name="Garzon A."/>
            <person name="Thode G."/>
            <person name="Daga R.R."/>
            <person name="Cruzado L."/>
            <person name="Jimenez J."/>
            <person name="Sanchez M."/>
            <person name="del Rey F."/>
            <person name="Benito J."/>
            <person name="Dominguez A."/>
            <person name="Revuelta J.L."/>
            <person name="Moreno S."/>
            <person name="Armstrong J."/>
            <person name="Forsburg S.L."/>
            <person name="Cerutti L."/>
            <person name="Lowe T."/>
            <person name="McCombie W.R."/>
            <person name="Paulsen I."/>
            <person name="Potashkin J."/>
            <person name="Shpakovski G.V."/>
            <person name="Ussery D."/>
            <person name="Barrell B.G."/>
            <person name="Nurse P."/>
        </authorList>
    </citation>
    <scope>NUCLEOTIDE SEQUENCE [LARGE SCALE GENOMIC DNA]</scope>
    <source>
        <strain>972 / ATCC 24843</strain>
    </source>
</reference>
<reference key="2">
    <citation type="journal article" date="2004" name="Cell">
        <title>Two RNAi complexes, RITS and RDRC, physically interact and localize to noncoding centromeric RNAs.</title>
        <authorList>
            <person name="Motamedi M.R."/>
            <person name="Verdel A."/>
            <person name="Colmenares S.U."/>
            <person name="Gerber S.A."/>
            <person name="Gygi S.P."/>
            <person name="Moazed D."/>
        </authorList>
    </citation>
    <scope>FUNCTION</scope>
    <scope>COMPOSITION OF THE RDRC AND RITS COMPLEXES</scope>
    <scope>SUBCELLULAR LOCATION</scope>
    <scope>IDENTIFICATION BY MASS SPECTROMETRY</scope>
</reference>
<reference key="3">
    <citation type="journal article" date="2006" name="Nat. Biotechnol.">
        <title>ORFeome cloning and global analysis of protein localization in the fission yeast Schizosaccharomyces pombe.</title>
        <authorList>
            <person name="Matsuyama A."/>
            <person name="Arai R."/>
            <person name="Yashiroda Y."/>
            <person name="Shirai A."/>
            <person name="Kamata A."/>
            <person name="Sekido S."/>
            <person name="Kobayashi Y."/>
            <person name="Hashimoto A."/>
            <person name="Hamamoto M."/>
            <person name="Hiraoka Y."/>
            <person name="Horinouchi S."/>
            <person name="Yoshida M."/>
        </authorList>
    </citation>
    <scope>SUBCELLULAR LOCATION [LARGE SCALE ANALYSIS]</scope>
</reference>
<reference key="4">
    <citation type="journal article" date="2008" name="J. Proteome Res.">
        <title>Phosphoproteome analysis of fission yeast.</title>
        <authorList>
            <person name="Wilson-Grady J.T."/>
            <person name="Villen J."/>
            <person name="Gygi S.P."/>
        </authorList>
    </citation>
    <scope>PHOSPHORYLATION [LARGE SCALE ANALYSIS] AT SER-325; THR-327 AND SER-329</scope>
    <scope>IDENTIFICATION BY MASS SPECTROMETRY</scope>
</reference>
<accession>O74518</accession>
<keyword id="KW-0067">ATP-binding</keyword>
<keyword id="KW-0131">Cell cycle</keyword>
<keyword id="KW-0159">Chromosome partition</keyword>
<keyword id="KW-0963">Cytoplasm</keyword>
<keyword id="KW-0460">Magnesium</keyword>
<keyword id="KW-0464">Manganese</keyword>
<keyword id="KW-0479">Metal-binding</keyword>
<keyword id="KW-0547">Nucleotide-binding</keyword>
<keyword id="KW-0539">Nucleus</keyword>
<keyword id="KW-0597">Phosphoprotein</keyword>
<keyword id="KW-1185">Reference proteome</keyword>
<keyword id="KW-0694">RNA-binding</keyword>
<keyword id="KW-0943">RNA-mediated gene silencing</keyword>
<keyword id="KW-0808">Transferase</keyword>
<dbReference type="EC" id="2.7.7.19"/>
<dbReference type="EMBL" id="CU329672">
    <property type="protein sequence ID" value="CAA20372.1"/>
    <property type="molecule type" value="Genomic_DNA"/>
</dbReference>
<dbReference type="PIR" id="T41543">
    <property type="entry name" value="T41543"/>
</dbReference>
<dbReference type="RefSeq" id="NP_588273.1">
    <property type="nucleotide sequence ID" value="NM_001023263.2"/>
</dbReference>
<dbReference type="SMR" id="O74518"/>
<dbReference type="BioGRID" id="275988">
    <property type="interactions" value="132"/>
</dbReference>
<dbReference type="ComplexPortal" id="CPX-25780">
    <property type="entry name" value="RNA-directed RNA polymerase complex"/>
</dbReference>
<dbReference type="DIP" id="DIP-60035N"/>
<dbReference type="FunCoup" id="O74518">
    <property type="interactions" value="82"/>
</dbReference>
<dbReference type="IntAct" id="O74518">
    <property type="interactions" value="2"/>
</dbReference>
<dbReference type="STRING" id="284812.O74518"/>
<dbReference type="iPTMnet" id="O74518"/>
<dbReference type="PaxDb" id="4896-SPCC663.12.1"/>
<dbReference type="EnsemblFungi" id="SPCC663.12.1">
    <property type="protein sequence ID" value="SPCC663.12.1:pep"/>
    <property type="gene ID" value="SPCC663.12"/>
</dbReference>
<dbReference type="GeneID" id="2539423"/>
<dbReference type="KEGG" id="spo:2539423"/>
<dbReference type="PomBase" id="SPCC663.12">
    <property type="gene designation" value="cid12"/>
</dbReference>
<dbReference type="VEuPathDB" id="FungiDB:SPCC663.12"/>
<dbReference type="eggNOG" id="KOG1906">
    <property type="taxonomic scope" value="Eukaryota"/>
</dbReference>
<dbReference type="HOGENOM" id="CLU_845088_0_0_1"/>
<dbReference type="InParanoid" id="O74518"/>
<dbReference type="OMA" id="LIGWLEM"/>
<dbReference type="PhylomeDB" id="O74518"/>
<dbReference type="PRO" id="PR:O74518"/>
<dbReference type="Proteomes" id="UP000002485">
    <property type="component" value="Chromosome III"/>
</dbReference>
<dbReference type="GO" id="GO:0005829">
    <property type="term" value="C:cytosol"/>
    <property type="evidence" value="ECO:0007005"/>
    <property type="project" value="PomBase"/>
</dbReference>
<dbReference type="GO" id="GO:0031380">
    <property type="term" value="C:nuclear RNA-directed RNA polymerase complex"/>
    <property type="evidence" value="ECO:0000314"/>
    <property type="project" value="PomBase"/>
</dbReference>
<dbReference type="GO" id="GO:0005634">
    <property type="term" value="C:nucleus"/>
    <property type="evidence" value="ECO:0000314"/>
    <property type="project" value="PomBase"/>
</dbReference>
<dbReference type="GO" id="GO:0031379">
    <property type="term" value="C:RNA-directed RNA polymerase complex"/>
    <property type="evidence" value="ECO:0000314"/>
    <property type="project" value="PomBase"/>
</dbReference>
<dbReference type="GO" id="GO:0005524">
    <property type="term" value="F:ATP binding"/>
    <property type="evidence" value="ECO:0007669"/>
    <property type="project" value="UniProtKB-KW"/>
</dbReference>
<dbReference type="GO" id="GO:0046872">
    <property type="term" value="F:metal ion binding"/>
    <property type="evidence" value="ECO:0007669"/>
    <property type="project" value="UniProtKB-KW"/>
</dbReference>
<dbReference type="GO" id="GO:1990817">
    <property type="term" value="F:poly(A) RNA polymerase activity"/>
    <property type="evidence" value="ECO:0000314"/>
    <property type="project" value="PomBase"/>
</dbReference>
<dbReference type="GO" id="GO:0003723">
    <property type="term" value="F:RNA binding"/>
    <property type="evidence" value="ECO:0007669"/>
    <property type="project" value="UniProtKB-KW"/>
</dbReference>
<dbReference type="GO" id="GO:0007059">
    <property type="term" value="P:chromosome segregation"/>
    <property type="evidence" value="ECO:0007669"/>
    <property type="project" value="UniProtKB-KW"/>
</dbReference>
<dbReference type="GO" id="GO:1990431">
    <property type="term" value="P:priRNA 3'-end processing"/>
    <property type="evidence" value="ECO:0000315"/>
    <property type="project" value="PomBase"/>
</dbReference>
<dbReference type="GO" id="GO:0031048">
    <property type="term" value="P:regulatory ncRNA-mediated heterochromatin formation"/>
    <property type="evidence" value="ECO:0000315"/>
    <property type="project" value="PomBase"/>
</dbReference>
<dbReference type="GO" id="GO:0140727">
    <property type="term" value="P:siRNA-mediated pericentric heterochromatin formation"/>
    <property type="evidence" value="ECO:0000315"/>
    <property type="project" value="PomBase"/>
</dbReference>
<dbReference type="CDD" id="cd05402">
    <property type="entry name" value="NT_PAP_TUTase"/>
    <property type="match status" value="1"/>
</dbReference>
<dbReference type="Gene3D" id="1.10.1410.10">
    <property type="match status" value="1"/>
</dbReference>
<dbReference type="Gene3D" id="3.30.460.10">
    <property type="entry name" value="Beta Polymerase, domain 2"/>
    <property type="match status" value="1"/>
</dbReference>
<dbReference type="InterPro" id="IPR054708">
    <property type="entry name" value="MTPAP-like_central"/>
</dbReference>
<dbReference type="InterPro" id="IPR043519">
    <property type="entry name" value="NT_sf"/>
</dbReference>
<dbReference type="InterPro" id="IPR002058">
    <property type="entry name" value="PAP_assoc"/>
</dbReference>
<dbReference type="InterPro" id="IPR045862">
    <property type="entry name" value="Trf4-like"/>
</dbReference>
<dbReference type="PANTHER" id="PTHR23092">
    <property type="entry name" value="POLY(A) RNA POLYMERASE"/>
    <property type="match status" value="1"/>
</dbReference>
<dbReference type="PANTHER" id="PTHR23092:SF52">
    <property type="entry name" value="POLY(A) RNA POLYMERASE CID12"/>
    <property type="match status" value="1"/>
</dbReference>
<dbReference type="Pfam" id="PF22600">
    <property type="entry name" value="MTPAP-like_central"/>
    <property type="match status" value="1"/>
</dbReference>
<dbReference type="Pfam" id="PF03828">
    <property type="entry name" value="PAP_assoc"/>
    <property type="match status" value="1"/>
</dbReference>
<dbReference type="SUPFAM" id="SSF81301">
    <property type="entry name" value="Nucleotidyltransferase"/>
    <property type="match status" value="1"/>
</dbReference>
<dbReference type="SUPFAM" id="SSF81631">
    <property type="entry name" value="PAP/OAS1 substrate-binding domain"/>
    <property type="match status" value="1"/>
</dbReference>
<gene>
    <name type="primary">cid12</name>
    <name type="ORF">SPCC663.12</name>
</gene>
<proteinExistence type="evidence at protein level"/>
<evidence type="ECO:0000250" key="1"/>
<evidence type="ECO:0000269" key="2">
    <source>
    </source>
</evidence>
<evidence type="ECO:0000269" key="3">
    <source>
    </source>
</evidence>
<evidence type="ECO:0000269" key="4">
    <source>
    </source>
</evidence>
<evidence type="ECO:0000305" key="5"/>
<feature type="chain" id="PRO_0000256156" description="Poly(A) RNA polymerase cid12">
    <location>
        <begin position="1"/>
        <end position="336"/>
    </location>
</feature>
<feature type="domain" description="PAP-associated">
    <location>
        <begin position="209"/>
        <end position="263"/>
    </location>
</feature>
<feature type="binding site" evidence="1">
    <location>
        <position position="77"/>
    </location>
    <ligand>
        <name>Mg(2+)</name>
        <dbReference type="ChEBI" id="CHEBI:18420"/>
        <note>catalytic</note>
    </ligand>
</feature>
<feature type="binding site" evidence="1">
    <location>
        <position position="79"/>
    </location>
    <ligand>
        <name>Mg(2+)</name>
        <dbReference type="ChEBI" id="CHEBI:18420"/>
        <note>catalytic</note>
    </ligand>
</feature>
<feature type="modified residue" description="Phosphoserine" evidence="4">
    <location>
        <position position="325"/>
    </location>
</feature>
<feature type="modified residue" description="Phosphothreonine" evidence="4">
    <location>
        <position position="327"/>
    </location>
</feature>
<feature type="modified residue" description="Phosphoserine" evidence="4">
    <location>
        <position position="329"/>
    </location>
</feature>
<comment type="function">
    <text evidence="2">Has a role in the RNA interference (RNAi) pathway which is important for heterochromatin formation and accurate chromosome segregation. A member of the RNA-directed RNA polymerase complex (RDRC) which is involved in the generation of small interfering RNAs (siRNAs) and mediate their association with the RNA-induced transcriptional silencing (RITS) complex. RITS acts as a priming complex for dsRNA synthesis at the site of non-coding centromeric RNA.</text>
</comment>
<comment type="catalytic activity">
    <reaction>
        <text>RNA(n) + ATP = RNA(n)-3'-adenine ribonucleotide + diphosphate</text>
        <dbReference type="Rhea" id="RHEA:11332"/>
        <dbReference type="Rhea" id="RHEA-COMP:14527"/>
        <dbReference type="Rhea" id="RHEA-COMP:17347"/>
        <dbReference type="ChEBI" id="CHEBI:30616"/>
        <dbReference type="ChEBI" id="CHEBI:33019"/>
        <dbReference type="ChEBI" id="CHEBI:140395"/>
        <dbReference type="ChEBI" id="CHEBI:173115"/>
        <dbReference type="EC" id="2.7.7.19"/>
    </reaction>
</comment>
<comment type="cofactor">
    <cofactor evidence="1">
        <name>Mg(2+)</name>
        <dbReference type="ChEBI" id="CHEBI:18420"/>
    </cofactor>
    <cofactor evidence="1">
        <name>Mn(2+)</name>
        <dbReference type="ChEBI" id="CHEBI:29035"/>
    </cofactor>
</comment>
<comment type="subunit">
    <text>Cid12, hrr1 and rdp1 interact forming the RNA-directed RNA polymerase complex (RDRC). The RDRC complex interacts with the RITS complex via interaction between ago1 and hrr1. Clr4 has a role in mediating this interaction.</text>
</comment>
<comment type="subcellular location">
    <subcellularLocation>
        <location evidence="3">Cytoplasm</location>
    </subcellularLocation>
    <subcellularLocation>
        <location evidence="2 3">Nucleus</location>
    </subcellularLocation>
</comment>
<comment type="similarity">
    <text evidence="5">Belongs to the DNA polymerase type-B-like family.</text>
</comment>
<sequence>MGKVLLELHSVPWNEEGLSDNARLYSFLEFVSPKIEELKYRKLLLEKLQTHIREVVLDAELQVYGSMYIGTTLSISDVDVSLKSPRVGELEKRRVTMVLRKYLDADADFHSSARVPRINLVDVSGIGVDLTFGNDKACRTAELQKAYNEEHPIFGRLLMLLKHWLFERDLENVHHGGIASCALSYMLIGWLEMRFHKKGIDSEVQPIRALLQKFFYFWGVEWTYELFVLRPLTGQIVPKLQKGWLNEVQPNLLSIEDPIDRNNDIGKQSFQISMIKAAFVASANELLSDKTWFSTFAITEDEMFLCKQFENVINTKRSLVEGYDSDTESDELQAGG</sequence>
<name>CID12_SCHPO</name>
<protein>
    <recommendedName>
        <fullName>Poly(A) RNA polymerase cid12</fullName>
        <shortName>PAP</shortName>
        <ecNumber>2.7.7.19</ecNumber>
    </recommendedName>
    <alternativeName>
        <fullName>Caffeine-induced death protein 12</fullName>
    </alternativeName>
    <alternativeName>
        <fullName>Polynucleotide adenylyltransferase cid12</fullName>
    </alternativeName>
</protein>
<organism>
    <name type="scientific">Schizosaccharomyces pombe (strain 972 / ATCC 24843)</name>
    <name type="common">Fission yeast</name>
    <dbReference type="NCBI Taxonomy" id="284812"/>
    <lineage>
        <taxon>Eukaryota</taxon>
        <taxon>Fungi</taxon>
        <taxon>Dikarya</taxon>
        <taxon>Ascomycota</taxon>
        <taxon>Taphrinomycotina</taxon>
        <taxon>Schizosaccharomycetes</taxon>
        <taxon>Schizosaccharomycetales</taxon>
        <taxon>Schizosaccharomycetaceae</taxon>
        <taxon>Schizosaccharomyces</taxon>
    </lineage>
</organism>